<comment type="function">
    <text evidence="6 7 9">Serine/threonine-protein kinase that is required for the mitogen or stress-induced phosphorylation of the transcription factors CREB1 and ATF1 and for the regulation of the transcription factor RELA, and that contributes to gene activation by histone phosphorylation and functions in the regulation of inflammatory genes. Phosphorylates CREB1 and ATF1 in response to mitogenic or stress stimuli such as UV-C irradiation, epidermal growth factor (EGF) and anisomycin. Plays an essential role in the control of RELA transcriptional activity in response to TNF. Phosphorylates 'Ser-10' of histone H3 in response to mitogenics, stress stimuli and EGF, which results in the transcriptional activation of several immediate early genes, including proto-oncogenes c-fos/FOS and c-jun/JUN. May also phosphorylate 'Ser-28' of histone H3. Mediates the mitogen- and stress-induced phosphorylation of high mobility group protein 1 (HMGN1/HMG14). In lipopolysaccharide-stimulated primary macrophages, acts downstream of the Toll-like receptor TLR4 to limit the production of pro-inflammatory cytokines. Functions probably by inducing transcription of the MAP kinase phosphatase DUSP1 and the anti-inflammatory cytokine interleukin 10 (IL10), via CREB1 and ATF1 transcription factors.</text>
</comment>
<comment type="catalytic activity">
    <reaction evidence="9">
        <text>L-seryl-[protein] + ATP = O-phospho-L-seryl-[protein] + ADP + H(+)</text>
        <dbReference type="Rhea" id="RHEA:17989"/>
        <dbReference type="Rhea" id="RHEA-COMP:9863"/>
        <dbReference type="Rhea" id="RHEA-COMP:11604"/>
        <dbReference type="ChEBI" id="CHEBI:15378"/>
        <dbReference type="ChEBI" id="CHEBI:29999"/>
        <dbReference type="ChEBI" id="CHEBI:30616"/>
        <dbReference type="ChEBI" id="CHEBI:83421"/>
        <dbReference type="ChEBI" id="CHEBI:456216"/>
        <dbReference type="EC" id="2.7.11.1"/>
    </reaction>
</comment>
<comment type="catalytic activity">
    <reaction evidence="9">
        <text>L-threonyl-[protein] + ATP = O-phospho-L-threonyl-[protein] + ADP + H(+)</text>
        <dbReference type="Rhea" id="RHEA:46608"/>
        <dbReference type="Rhea" id="RHEA-COMP:11060"/>
        <dbReference type="Rhea" id="RHEA-COMP:11605"/>
        <dbReference type="ChEBI" id="CHEBI:15378"/>
        <dbReference type="ChEBI" id="CHEBI:30013"/>
        <dbReference type="ChEBI" id="CHEBI:30616"/>
        <dbReference type="ChEBI" id="CHEBI:61977"/>
        <dbReference type="ChEBI" id="CHEBI:456216"/>
        <dbReference type="EC" id="2.7.11.1"/>
    </reaction>
</comment>
<comment type="cofactor">
    <cofactor evidence="9">
        <name>Mg(2+)</name>
        <dbReference type="ChEBI" id="CHEBI:18420"/>
    </cofactor>
</comment>
<comment type="activity regulation">
    <text evidence="1">Activated by phosphorylation at Ser-343, Thr-568 and Thr-687 by MAPK1/ERK2, MAPK3/ERK1 and MAPK14/p38-alpha, and by further autophosphorylation of Ser-196, Ser-360 and Ser-365 by the activated C-terminal kinase domain.</text>
</comment>
<comment type="subunit">
    <text>Forms a complex with either MAPK1/ERK2 or MAPK3/ERK1 in quiescent cells which transiently dissociates following mitogenic stimulation. Also associates with MAPK14/p38-alpha. Activated RPS6KA4 associates with and phosphorylates the NF-kappa-B p65 subunit RELA.</text>
</comment>
<comment type="interaction">
    <interactant intactId="EBI-73933">
        <id>O75676</id>
    </interactant>
    <interactant intactId="EBI-73946">
        <id>Q16539</id>
        <label>MAPK14</label>
    </interactant>
    <organismsDiffer>false</organismsDiffer>
    <experiments>9</experiments>
</comment>
<comment type="interaction">
    <interactant intactId="EBI-21622593">
        <id>O75676-2</id>
    </interactant>
    <interactant intactId="EBI-948266">
        <id>O14901</id>
        <label>KLF11</label>
    </interactant>
    <organismsDiffer>false</organismsDiffer>
    <experiments>3</experiments>
</comment>
<comment type="subcellular location">
    <subcellularLocation>
        <location evidence="6 9">Nucleus</location>
    </subcellularLocation>
</comment>
<comment type="alternative products">
    <event type="alternative splicing"/>
    <isoform>
        <id>O75676-1</id>
        <name>1</name>
        <sequence type="displayed"/>
    </isoform>
    <isoform>
        <id>O75676-2</id>
        <name>2</name>
        <sequence type="described" ref="VSP_017733"/>
    </isoform>
</comment>
<comment type="PTM">
    <text evidence="1">Ser-343 and Thr-568 phosphorylation is required for kinase activity. Ser-343 and Ser-196 are autophosphorylated by the C-terminal kinase domain, and their phosphorylation is essential for the catalytic activity of the N-terminal kinase domain. Phosphorylated at Ser-343, Thr-568 and Thr-687 by MAPK1/ERK2, MAPK3/ERK1 and MAPK14/p38-alpha. Autophosphorylated at Ser-737 and Ser-745 by the N-terminal kinase domain (By similarity).</text>
</comment>
<comment type="miscellaneous">
    <text evidence="2">Enzyme activity requires the presence of both kinase domains.</text>
</comment>
<comment type="similarity">
    <text evidence="13">Belongs to the protein kinase superfamily. AGC Ser/Thr protein kinase family. S6 kinase subfamily.</text>
</comment>
<sequence length="772" mass="85606">MGDEDDDESCAVELRITEANLTGHEEKVSVENFELLKVLGTGAYGKVFLVRKAGGHDAGKLYAMKVLRKAALVQRAKTQEHTRTERSVLELVRQAPFLVTLHYAFQTDAKLHLILDYVSGGEMFTHLYQRQYFKEAEVRVYGGEIVLALEHLHKLGIIYRDLKLENVLLDSEGHIVLTDFGLSKEFLTEEKERTFSFCGTIEYMAPEIIRSKTGHGKAVDWWSLGILLFELLTGASPFTLEGERNTQAEVSRRILKCSPPFPPRIGPVAQDLLQRLLCKDPKKRLGAGPQGAQEVRNHPFFQGLDWVALAARKIPAPFRPQIRSELDVGNFAEEFTRLEPVYSPPGSPPPGDPRIFQGYSFVAPSILFDHNNAVMTDGLEAPGAGDRPGRAAVARSAMMQDSPFFQQYELDLREPALGQGSFSVCRRCRQRQSGQEFAVKILSRRLEANTQREVAALRLCQSHPNVVNLHEVHHDQLHTYLVLELLRGGELLEHIRKKRHFSESEASQILRSLVSAVSFMHEEAGVVHRDLKPENILYADDTPGAPVKIIDFGFARLRPQSPGVPMQTPCFTLQYAAPELLAQQGYDESCDLWSLGVILYMMLSGQVPFQGASGQGGQSQAAEIMCKIREGRFSLDGEAWQGVSEEAKELVRGLLTVDPAKRLKLEGLRGSSWLQDGSARSSPPLRTPDVLESSGPAVRSGLNATFMAFNRGKREGFFLKSVENAPLAKRRKQKLRSATASRRGSPAPANPGRAPVASKGAPRRANGPLPPS</sequence>
<accession>O75676</accession>
<accession>A8K7Z8</accession>
<accession>O75585</accession>
<accession>Q53ES8</accession>
<protein>
    <recommendedName>
        <fullName>Ribosomal protein S6 kinase alpha-4</fullName>
        <shortName>S6K-alpha-4</shortName>
        <ecNumber>2.7.11.1</ecNumber>
    </recommendedName>
    <alternativeName>
        <fullName>90 kDa ribosomal protein S6 kinase 4</fullName>
    </alternativeName>
    <alternativeName>
        <fullName>Nuclear mitogen- and stress-activated protein kinase 2</fullName>
    </alternativeName>
    <alternativeName>
        <fullName>Ribosomal protein kinase B</fullName>
        <shortName>RSKB</shortName>
    </alternativeName>
</protein>
<name>KS6A4_HUMAN</name>
<feature type="chain" id="PRO_0000086205" description="Ribosomal protein S6 kinase alpha-4">
    <location>
        <begin position="1"/>
        <end position="772"/>
    </location>
</feature>
<feature type="domain" description="Protein kinase 1" evidence="3">
    <location>
        <begin position="33"/>
        <end position="301"/>
    </location>
</feature>
<feature type="domain" description="AGC-kinase C-terminal" evidence="4">
    <location>
        <begin position="302"/>
        <end position="371"/>
    </location>
</feature>
<feature type="domain" description="Protein kinase 2" evidence="3">
    <location>
        <begin position="411"/>
        <end position="674"/>
    </location>
</feature>
<feature type="region of interest" description="Disordered" evidence="5">
    <location>
        <begin position="673"/>
        <end position="696"/>
    </location>
</feature>
<feature type="region of interest" description="Required for nuclear targeting and association with MAPK14">
    <location>
        <begin position="725"/>
        <end position="772"/>
    </location>
</feature>
<feature type="region of interest" description="Disordered" evidence="5">
    <location>
        <begin position="728"/>
        <end position="772"/>
    </location>
</feature>
<feature type="active site" description="Proton acceptor" evidence="1">
    <location>
        <position position="161"/>
    </location>
</feature>
<feature type="active site" description="Proton acceptor" evidence="1">
    <location>
        <position position="530"/>
    </location>
</feature>
<feature type="binding site" evidence="3">
    <location>
        <begin position="39"/>
        <end position="47"/>
    </location>
    <ligand>
        <name>ATP</name>
        <dbReference type="ChEBI" id="CHEBI:30616"/>
    </ligand>
</feature>
<feature type="binding site" evidence="3">
    <location>
        <position position="65"/>
    </location>
    <ligand>
        <name>ATP</name>
        <dbReference type="ChEBI" id="CHEBI:30616"/>
    </ligand>
</feature>
<feature type="binding site" evidence="3">
    <location>
        <begin position="417"/>
        <end position="425"/>
    </location>
    <ligand>
        <name>ATP</name>
        <dbReference type="ChEBI" id="CHEBI:30616"/>
    </ligand>
</feature>
<feature type="binding site" evidence="3">
    <location>
        <position position="440"/>
    </location>
    <ligand>
        <name>ATP</name>
        <dbReference type="ChEBI" id="CHEBI:30616"/>
    </ligand>
</feature>
<feature type="modified residue" description="Phosphoserine; by autocatalysis" evidence="1">
    <location>
        <position position="196"/>
    </location>
</feature>
<feature type="modified residue" description="Phosphoserine; by MAPK1, MAPK3 and MAPK14" evidence="13">
    <location>
        <position position="343"/>
    </location>
</feature>
<feature type="modified residue" description="Phosphoserine" evidence="15 16 17">
    <location>
        <position position="347"/>
    </location>
</feature>
<feature type="modified residue" description="Phosphoserine; by autocatalysis" evidence="1">
    <location>
        <position position="360"/>
    </location>
</feature>
<feature type="modified residue" description="Phosphoserine; by autocatalysis" evidence="1">
    <location>
        <position position="365"/>
    </location>
</feature>
<feature type="modified residue" description="Phosphothreonine" evidence="16 17">
    <location>
        <position position="542"/>
    </location>
</feature>
<feature type="modified residue" description="Phosphothreonine; by MAPK1, MAPK3 and MAPK14" evidence="1">
    <location>
        <position position="568"/>
    </location>
</feature>
<feature type="modified residue" description="Phosphoserine" evidence="15">
    <location>
        <position position="634"/>
    </location>
</feature>
<feature type="modified residue" description="Phosphoserine" evidence="15 18">
    <location>
        <position position="678"/>
    </location>
</feature>
<feature type="modified residue" description="Phosphothreonine" evidence="15 16 17">
    <location>
        <position position="687"/>
    </location>
</feature>
<feature type="modified residue" description="Phosphoserine; by autocatalysis" evidence="13">
    <location>
        <position position="737"/>
    </location>
</feature>
<feature type="modified residue" description="Phosphoserine" evidence="15 18">
    <location>
        <position position="745"/>
    </location>
</feature>
<feature type="splice variant" id="VSP_017733" description="In isoform 2." evidence="11 12">
    <location>
        <begin position="401"/>
        <end position="406"/>
    </location>
</feature>
<feature type="sequence variant" id="VAR_040632" description="In a breast infiltrating ductal carcinoma sample; somatic mutation; dbSNP:rs746466314." evidence="8">
    <original>S</original>
    <variation>L</variation>
    <location>
        <position position="236"/>
    </location>
</feature>
<feature type="sequence variant" id="VAR_040633" description="In dbSNP:rs17857342." evidence="8 10">
    <original>S</original>
    <variation>A</variation>
    <location>
        <position position="758"/>
    </location>
</feature>
<feature type="mutagenesis site" description="Strongly elevates basal activity." evidence="6">
    <original>F</original>
    <variation>A</variation>
    <location>
        <position position="709"/>
    </location>
</feature>
<feature type="sequence conflict" description="In Ref. 3; BAD97281." evidence="13" ref="3">
    <original>L</original>
    <variation>P</variation>
    <location>
        <position position="477"/>
    </location>
</feature>
<feature type="sequence conflict" description="In Ref. 3; BAD97281." evidence="13" ref="3">
    <original>QQ</original>
    <variation>Q</variation>
    <location sequence="O75676-2">
        <begin position="400"/>
        <end position="401"/>
    </location>
</feature>
<proteinExistence type="evidence at protein level"/>
<reference evidence="13" key="1">
    <citation type="journal article" date="1998" name="J. Biol. Chem.">
        <title>RSK-B, a novel ribosomal S6 kinase family member, is a CREB kinase under dominant control of p38alpha mitogen-activated protein kinase (p38alphaMAPK).</title>
        <authorList>
            <person name="Pierrat B."/>
            <person name="Correia J.D.S."/>
            <person name="Mary J.L."/>
            <person name="Tomas-Zuber M."/>
            <person name="Lesslauer W."/>
        </authorList>
    </citation>
    <scope>NUCLEOTIDE SEQUENCE [MRNA] (ISOFORM 1)</scope>
    <scope>FUNCTION</scope>
    <scope>ACTIVITY REGULATION</scope>
    <scope>INTERACTION WITH MAPK14; MAPK1 AND MAPK3</scope>
    <scope>SUBCELLULAR LOCATION</scope>
    <source>
        <tissue evidence="14">Placenta</tissue>
    </source>
</reference>
<reference key="2">
    <citation type="journal article" date="2004" name="Nat. Genet.">
        <title>Complete sequencing and characterization of 21,243 full-length human cDNAs.</title>
        <authorList>
            <person name="Ota T."/>
            <person name="Suzuki Y."/>
            <person name="Nishikawa T."/>
            <person name="Otsuki T."/>
            <person name="Sugiyama T."/>
            <person name="Irie R."/>
            <person name="Wakamatsu A."/>
            <person name="Hayashi K."/>
            <person name="Sato H."/>
            <person name="Nagai K."/>
            <person name="Kimura K."/>
            <person name="Makita H."/>
            <person name="Sekine M."/>
            <person name="Obayashi M."/>
            <person name="Nishi T."/>
            <person name="Shibahara T."/>
            <person name="Tanaka T."/>
            <person name="Ishii S."/>
            <person name="Yamamoto J."/>
            <person name="Saito K."/>
            <person name="Kawai Y."/>
            <person name="Isono Y."/>
            <person name="Nakamura Y."/>
            <person name="Nagahari K."/>
            <person name="Murakami K."/>
            <person name="Yasuda T."/>
            <person name="Iwayanagi T."/>
            <person name="Wagatsuma M."/>
            <person name="Shiratori A."/>
            <person name="Sudo H."/>
            <person name="Hosoiri T."/>
            <person name="Kaku Y."/>
            <person name="Kodaira H."/>
            <person name="Kondo H."/>
            <person name="Sugawara M."/>
            <person name="Takahashi M."/>
            <person name="Kanda K."/>
            <person name="Yokoi T."/>
            <person name="Furuya T."/>
            <person name="Kikkawa E."/>
            <person name="Omura Y."/>
            <person name="Abe K."/>
            <person name="Kamihara K."/>
            <person name="Katsuta N."/>
            <person name="Sato K."/>
            <person name="Tanikawa M."/>
            <person name="Yamazaki M."/>
            <person name="Ninomiya K."/>
            <person name="Ishibashi T."/>
            <person name="Yamashita H."/>
            <person name="Murakawa K."/>
            <person name="Fujimori K."/>
            <person name="Tanai H."/>
            <person name="Kimata M."/>
            <person name="Watanabe M."/>
            <person name="Hiraoka S."/>
            <person name="Chiba Y."/>
            <person name="Ishida S."/>
            <person name="Ono Y."/>
            <person name="Takiguchi S."/>
            <person name="Watanabe S."/>
            <person name="Yosida M."/>
            <person name="Hotuta T."/>
            <person name="Kusano J."/>
            <person name="Kanehori K."/>
            <person name="Takahashi-Fujii A."/>
            <person name="Hara H."/>
            <person name="Tanase T.-O."/>
            <person name="Nomura Y."/>
            <person name="Togiya S."/>
            <person name="Komai F."/>
            <person name="Hara R."/>
            <person name="Takeuchi K."/>
            <person name="Arita M."/>
            <person name="Imose N."/>
            <person name="Musashino K."/>
            <person name="Yuuki H."/>
            <person name="Oshima A."/>
            <person name="Sasaki N."/>
            <person name="Aotsuka S."/>
            <person name="Yoshikawa Y."/>
            <person name="Matsunawa H."/>
            <person name="Ichihara T."/>
            <person name="Shiohata N."/>
            <person name="Sano S."/>
            <person name="Moriya S."/>
            <person name="Momiyama H."/>
            <person name="Satoh N."/>
            <person name="Takami S."/>
            <person name="Terashima Y."/>
            <person name="Suzuki O."/>
            <person name="Nakagawa S."/>
            <person name="Senoh A."/>
            <person name="Mizoguchi H."/>
            <person name="Goto Y."/>
            <person name="Shimizu F."/>
            <person name="Wakebe H."/>
            <person name="Hishigaki H."/>
            <person name="Watanabe T."/>
            <person name="Sugiyama A."/>
            <person name="Takemoto M."/>
            <person name="Kawakami B."/>
            <person name="Yamazaki M."/>
            <person name="Watanabe K."/>
            <person name="Kumagai A."/>
            <person name="Itakura S."/>
            <person name="Fukuzumi Y."/>
            <person name="Fujimori Y."/>
            <person name="Komiyama M."/>
            <person name="Tashiro H."/>
            <person name="Tanigami A."/>
            <person name="Fujiwara T."/>
            <person name="Ono T."/>
            <person name="Yamada K."/>
            <person name="Fujii Y."/>
            <person name="Ozaki K."/>
            <person name="Hirao M."/>
            <person name="Ohmori Y."/>
            <person name="Kawabata A."/>
            <person name="Hikiji T."/>
            <person name="Kobatake N."/>
            <person name="Inagaki H."/>
            <person name="Ikema Y."/>
            <person name="Okamoto S."/>
            <person name="Okitani R."/>
            <person name="Kawakami T."/>
            <person name="Noguchi S."/>
            <person name="Itoh T."/>
            <person name="Shigeta K."/>
            <person name="Senba T."/>
            <person name="Matsumura K."/>
            <person name="Nakajima Y."/>
            <person name="Mizuno T."/>
            <person name="Morinaga M."/>
            <person name="Sasaki M."/>
            <person name="Togashi T."/>
            <person name="Oyama M."/>
            <person name="Hata H."/>
            <person name="Watanabe M."/>
            <person name="Komatsu T."/>
            <person name="Mizushima-Sugano J."/>
            <person name="Satoh T."/>
            <person name="Shirai Y."/>
            <person name="Takahashi Y."/>
            <person name="Nakagawa K."/>
            <person name="Okumura K."/>
            <person name="Nagase T."/>
            <person name="Nomura N."/>
            <person name="Kikuchi H."/>
            <person name="Masuho Y."/>
            <person name="Yamashita R."/>
            <person name="Nakai K."/>
            <person name="Yada T."/>
            <person name="Nakamura Y."/>
            <person name="Ohara O."/>
            <person name="Isogai T."/>
            <person name="Sugano S."/>
        </authorList>
    </citation>
    <scope>NUCLEOTIDE SEQUENCE [LARGE SCALE MRNA] (ISOFORM 1)</scope>
    <source>
        <tissue>Synovium</tissue>
    </source>
</reference>
<reference key="3">
    <citation type="submission" date="2005-03" db="EMBL/GenBank/DDBJ databases">
        <authorList>
            <person name="Totoki Y."/>
            <person name="Toyoda A."/>
            <person name="Takeda T."/>
            <person name="Sakaki Y."/>
            <person name="Tanaka A."/>
            <person name="Yokoyama S."/>
            <person name="Ohara O."/>
            <person name="Nagase T."/>
            <person name="Kikuno R.F."/>
        </authorList>
    </citation>
    <scope>NUCLEOTIDE SEQUENCE [LARGE SCALE MRNA] (ISOFORM 2)</scope>
    <scope>VARIANT ALA-758</scope>
    <source>
        <tissue>Brain</tissue>
    </source>
</reference>
<reference key="4">
    <citation type="submission" date="2005-07" db="EMBL/GenBank/DDBJ databases">
        <authorList>
            <person name="Mural R.J."/>
            <person name="Istrail S."/>
            <person name="Sutton G.G."/>
            <person name="Florea L."/>
            <person name="Halpern A.L."/>
            <person name="Mobarry C.M."/>
            <person name="Lippert R."/>
            <person name="Walenz B."/>
            <person name="Shatkay H."/>
            <person name="Dew I."/>
            <person name="Miller J.R."/>
            <person name="Flanigan M.J."/>
            <person name="Edwards N.J."/>
            <person name="Bolanos R."/>
            <person name="Fasulo D."/>
            <person name="Halldorsson B.V."/>
            <person name="Hannenhalli S."/>
            <person name="Turner R."/>
            <person name="Yooseph S."/>
            <person name="Lu F."/>
            <person name="Nusskern D.R."/>
            <person name="Shue B.C."/>
            <person name="Zheng X.H."/>
            <person name="Zhong F."/>
            <person name="Delcher A.L."/>
            <person name="Huson D.H."/>
            <person name="Kravitz S.A."/>
            <person name="Mouchard L."/>
            <person name="Reinert K."/>
            <person name="Remington K.A."/>
            <person name="Clark A.G."/>
            <person name="Waterman M.S."/>
            <person name="Eichler E.E."/>
            <person name="Adams M.D."/>
            <person name="Hunkapiller M.W."/>
            <person name="Myers E.W."/>
            <person name="Venter J.C."/>
        </authorList>
    </citation>
    <scope>NUCLEOTIDE SEQUENCE [LARGE SCALE GENOMIC DNA]</scope>
</reference>
<reference evidence="13" key="5">
    <citation type="journal article" date="1998" name="EMBO J.">
        <title>Mitogen- and stress-activated protein kinase-1 (MSK1) is directly activated by MAPK and SAPK2/p38, and may mediate activation of CREB.</title>
        <authorList>
            <person name="Deak M."/>
            <person name="Clifton A.D."/>
            <person name="Lucocq J.M."/>
            <person name="Alessi D.R."/>
        </authorList>
    </citation>
    <scope>NUCLEOTIDE SEQUENCE [MRNA] OF 17-727 (ISOFORM 2)</scope>
</reference>
<reference key="6">
    <citation type="journal article" date="2001" name="J. Biol. Chem.">
        <title>C-terminal elements control location, activation threshold, and p38 docking of ribosomal S6 kinase B (RSKB).</title>
        <authorList>
            <person name="Tomas-Zuber M."/>
            <person name="Mary J.L."/>
            <person name="Lamour F."/>
            <person name="Bur D."/>
            <person name="Lesslauer W."/>
        </authorList>
    </citation>
    <scope>FUNCTION</scope>
    <scope>INTERACTION WITH MAPK14</scope>
    <scope>SUBCELLULAR LOCATION</scope>
    <scope>MUTAGENESIS OF PHE-709</scope>
</reference>
<reference key="7">
    <citation type="journal article" date="2003" name="EMBO J.">
        <title>MSK2 and MSK1 mediate the mitogen- and stress-induced phosphorylation of histone H3 and HMG-14.</title>
        <authorList>
            <person name="Soloaga A."/>
            <person name="Thomson S."/>
            <person name="Wiggin G.R."/>
            <person name="Rampersaud N."/>
            <person name="Dyson M.H."/>
            <person name="Hazzalin C.A."/>
            <person name="Mahadevan L.C."/>
            <person name="Arthur J.S."/>
        </authorList>
    </citation>
    <scope>FUNCTION IN PHOSPHORYLATION OF HISTONE H3 AND HMGN1/HMG14</scope>
</reference>
<reference key="8">
    <citation type="journal article" date="2008" name="Front. Biosci.">
        <title>MSK activation and physiological roles.</title>
        <authorList>
            <person name="Arthur J.S."/>
        </authorList>
    </citation>
    <scope>REVIEW ON FUNCTION</scope>
</reference>
<reference key="9">
    <citation type="journal article" date="2008" name="Mol. Cell">
        <title>Kinase-selective enrichment enables quantitative phosphoproteomics of the kinome across the cell cycle.</title>
        <authorList>
            <person name="Daub H."/>
            <person name="Olsen J.V."/>
            <person name="Bairlein M."/>
            <person name="Gnad F."/>
            <person name="Oppermann F.S."/>
            <person name="Korner R."/>
            <person name="Greff Z."/>
            <person name="Keri G."/>
            <person name="Stemmann O."/>
            <person name="Mann M."/>
        </authorList>
    </citation>
    <scope>PHOSPHORYLATION [LARGE SCALE ANALYSIS] AT SER-347; SER-634; SER-678; THR-687 AND SER-745</scope>
    <scope>IDENTIFICATION BY MASS SPECTROMETRY [LARGE SCALE ANALYSIS]</scope>
    <source>
        <tissue>Cervix carcinoma</tissue>
    </source>
</reference>
<reference key="10">
    <citation type="journal article" date="2008" name="Proc. Natl. Acad. Sci. U.S.A.">
        <title>A quantitative atlas of mitotic phosphorylation.</title>
        <authorList>
            <person name="Dephoure N."/>
            <person name="Zhou C."/>
            <person name="Villen J."/>
            <person name="Beausoleil S.A."/>
            <person name="Bakalarski C.E."/>
            <person name="Elledge S.J."/>
            <person name="Gygi S.P."/>
        </authorList>
    </citation>
    <scope>IDENTIFICATION BY MASS SPECTROMETRY [LARGE SCALE ANALYSIS]</scope>
    <source>
        <tissue>Cervix carcinoma</tissue>
    </source>
</reference>
<reference key="11">
    <citation type="journal article" date="2009" name="Mol. Cell. Proteomics">
        <title>Large-scale proteomics analysis of the human kinome.</title>
        <authorList>
            <person name="Oppermann F.S."/>
            <person name="Gnad F."/>
            <person name="Olsen J.V."/>
            <person name="Hornberger R."/>
            <person name="Greff Z."/>
            <person name="Keri G."/>
            <person name="Mann M."/>
            <person name="Daub H."/>
        </authorList>
    </citation>
    <scope>PHOSPHORYLATION [LARGE SCALE ANALYSIS] AT SER-347; THR-542 AND THR-687</scope>
    <scope>IDENTIFICATION BY MASS SPECTROMETRY [LARGE SCALE ANALYSIS]</scope>
</reference>
<reference key="12">
    <citation type="journal article" date="2009" name="Trends Biochem. Sci.">
        <title>The versatile role of MSKs in transcriptional regulation.</title>
        <authorList>
            <person name="Vermeulen L."/>
            <person name="Vanden Berghe W."/>
            <person name="Beck I.M."/>
            <person name="De Bosscher K."/>
            <person name="Haegeman G."/>
        </authorList>
    </citation>
    <scope>REVIEW ON FUNCTION</scope>
</reference>
<reference key="13">
    <citation type="journal article" date="2010" name="Sci. Signal.">
        <title>Quantitative phosphoproteomics reveals widespread full phosphorylation site occupancy during mitosis.</title>
        <authorList>
            <person name="Olsen J.V."/>
            <person name="Vermeulen M."/>
            <person name="Santamaria A."/>
            <person name="Kumar C."/>
            <person name="Miller M.L."/>
            <person name="Jensen L.J."/>
            <person name="Gnad F."/>
            <person name="Cox J."/>
            <person name="Jensen T.S."/>
            <person name="Nigg E.A."/>
            <person name="Brunak S."/>
            <person name="Mann M."/>
        </authorList>
    </citation>
    <scope>IDENTIFICATION BY MASS SPECTROMETRY [LARGE SCALE ANALYSIS]</scope>
    <source>
        <tissue>Cervix carcinoma</tissue>
    </source>
</reference>
<reference key="14">
    <citation type="journal article" date="2012" name="Proc. Natl. Acad. Sci. U.S.A.">
        <title>N-terminal acetylome analyses and functional insights of the N-terminal acetyltransferase NatB.</title>
        <authorList>
            <person name="Van Damme P."/>
            <person name="Lasa M."/>
            <person name="Polevoda B."/>
            <person name="Gazquez C."/>
            <person name="Elosegui-Artola A."/>
            <person name="Kim D.S."/>
            <person name="De Juan-Pardo E."/>
            <person name="Demeyer K."/>
            <person name="Hole K."/>
            <person name="Larrea E."/>
            <person name="Timmerman E."/>
            <person name="Prieto J."/>
            <person name="Arnesen T."/>
            <person name="Sherman F."/>
            <person name="Gevaert K."/>
            <person name="Aldabe R."/>
        </authorList>
    </citation>
    <scope>IDENTIFICATION BY MASS SPECTROMETRY [LARGE SCALE ANALYSIS]</scope>
</reference>
<reference key="15">
    <citation type="journal article" date="2013" name="J. Proteome Res.">
        <title>Toward a comprehensive characterization of a human cancer cell phosphoproteome.</title>
        <authorList>
            <person name="Zhou H."/>
            <person name="Di Palma S."/>
            <person name="Preisinger C."/>
            <person name="Peng M."/>
            <person name="Polat A.N."/>
            <person name="Heck A.J."/>
            <person name="Mohammed S."/>
        </authorList>
    </citation>
    <scope>PHOSPHORYLATION [LARGE SCALE ANALYSIS] AT SER-347; THR-542 AND THR-687</scope>
    <scope>IDENTIFICATION BY MASS SPECTROMETRY [LARGE SCALE ANALYSIS]</scope>
    <source>
        <tissue>Cervix carcinoma</tissue>
        <tissue>Erythroleukemia</tissue>
    </source>
</reference>
<reference key="16">
    <citation type="journal article" date="2014" name="J. Proteomics">
        <title>An enzyme assisted RP-RPLC approach for in-depth analysis of human liver phosphoproteome.</title>
        <authorList>
            <person name="Bian Y."/>
            <person name="Song C."/>
            <person name="Cheng K."/>
            <person name="Dong M."/>
            <person name="Wang F."/>
            <person name="Huang J."/>
            <person name="Sun D."/>
            <person name="Wang L."/>
            <person name="Ye M."/>
            <person name="Zou H."/>
        </authorList>
    </citation>
    <scope>PHOSPHORYLATION [LARGE SCALE ANALYSIS] AT SER-678 AND SER-745</scope>
    <scope>IDENTIFICATION BY MASS SPECTROMETRY [LARGE SCALE ANALYSIS]</scope>
    <source>
        <tissue>Liver</tissue>
    </source>
</reference>
<reference key="17">
    <citation type="journal article" date="2007" name="Nature">
        <title>Patterns of somatic mutation in human cancer genomes.</title>
        <authorList>
            <person name="Greenman C."/>
            <person name="Stephens P."/>
            <person name="Smith R."/>
            <person name="Dalgliesh G.L."/>
            <person name="Hunter C."/>
            <person name="Bignell G."/>
            <person name="Davies H."/>
            <person name="Teague J."/>
            <person name="Butler A."/>
            <person name="Stevens C."/>
            <person name="Edkins S."/>
            <person name="O'Meara S."/>
            <person name="Vastrik I."/>
            <person name="Schmidt E.E."/>
            <person name="Avis T."/>
            <person name="Barthorpe S."/>
            <person name="Bhamra G."/>
            <person name="Buck G."/>
            <person name="Choudhury B."/>
            <person name="Clements J."/>
            <person name="Cole J."/>
            <person name="Dicks E."/>
            <person name="Forbes S."/>
            <person name="Gray K."/>
            <person name="Halliday K."/>
            <person name="Harrison R."/>
            <person name="Hills K."/>
            <person name="Hinton J."/>
            <person name="Jenkinson A."/>
            <person name="Jones D."/>
            <person name="Menzies A."/>
            <person name="Mironenko T."/>
            <person name="Perry J."/>
            <person name="Raine K."/>
            <person name="Richardson D."/>
            <person name="Shepherd R."/>
            <person name="Small A."/>
            <person name="Tofts C."/>
            <person name="Varian J."/>
            <person name="Webb T."/>
            <person name="West S."/>
            <person name="Widaa S."/>
            <person name="Yates A."/>
            <person name="Cahill D.P."/>
            <person name="Louis D.N."/>
            <person name="Goldstraw P."/>
            <person name="Nicholson A.G."/>
            <person name="Brasseur F."/>
            <person name="Looijenga L."/>
            <person name="Weber B.L."/>
            <person name="Chiew Y.-E."/>
            <person name="DeFazio A."/>
            <person name="Greaves M.F."/>
            <person name="Green A.R."/>
            <person name="Campbell P."/>
            <person name="Birney E."/>
            <person name="Easton D.F."/>
            <person name="Chenevix-Trench G."/>
            <person name="Tan M.-H."/>
            <person name="Khoo S.K."/>
            <person name="Teh B.T."/>
            <person name="Yuen S.T."/>
            <person name="Leung S.Y."/>
            <person name="Wooster R."/>
            <person name="Futreal P.A."/>
            <person name="Stratton M.R."/>
        </authorList>
    </citation>
    <scope>VARIANTS [LARGE SCALE ANALYSIS] LEU-236 AND ALA-758</scope>
</reference>
<keyword id="KW-0025">Alternative splicing</keyword>
<keyword id="KW-0067">ATP-binding</keyword>
<keyword id="KW-0395">Inflammatory response</keyword>
<keyword id="KW-0418">Kinase</keyword>
<keyword id="KW-0460">Magnesium</keyword>
<keyword id="KW-0479">Metal-binding</keyword>
<keyword id="KW-0547">Nucleotide-binding</keyword>
<keyword id="KW-0539">Nucleus</keyword>
<keyword id="KW-0597">Phosphoprotein</keyword>
<keyword id="KW-1267">Proteomics identification</keyword>
<keyword id="KW-1185">Reference proteome</keyword>
<keyword id="KW-0677">Repeat</keyword>
<keyword id="KW-0723">Serine/threonine-protein kinase</keyword>
<keyword id="KW-0346">Stress response</keyword>
<keyword id="KW-0808">Transferase</keyword>
<evidence type="ECO:0000250" key="1"/>
<evidence type="ECO:0000250" key="2">
    <source>
        <dbReference type="UniProtKB" id="O75582"/>
    </source>
</evidence>
<evidence type="ECO:0000255" key="3">
    <source>
        <dbReference type="PROSITE-ProRule" id="PRU00159"/>
    </source>
</evidence>
<evidence type="ECO:0000255" key="4">
    <source>
        <dbReference type="PROSITE-ProRule" id="PRU00618"/>
    </source>
</evidence>
<evidence type="ECO:0000256" key="5">
    <source>
        <dbReference type="SAM" id="MobiDB-lite"/>
    </source>
</evidence>
<evidence type="ECO:0000269" key="6">
    <source>
    </source>
</evidence>
<evidence type="ECO:0000269" key="7">
    <source>
    </source>
</evidence>
<evidence type="ECO:0000269" key="8">
    <source>
    </source>
</evidence>
<evidence type="ECO:0000269" key="9">
    <source>
    </source>
</evidence>
<evidence type="ECO:0000269" key="10">
    <source ref="3"/>
</evidence>
<evidence type="ECO:0000303" key="11">
    <source>
    </source>
</evidence>
<evidence type="ECO:0000303" key="12">
    <source ref="3"/>
</evidence>
<evidence type="ECO:0000305" key="13"/>
<evidence type="ECO:0000312" key="14">
    <source>
        <dbReference type="EMBL" id="CAA09009.1"/>
    </source>
</evidence>
<evidence type="ECO:0007744" key="15">
    <source>
    </source>
</evidence>
<evidence type="ECO:0007744" key="16">
    <source>
    </source>
</evidence>
<evidence type="ECO:0007744" key="17">
    <source>
    </source>
</evidence>
<evidence type="ECO:0007744" key="18">
    <source>
    </source>
</evidence>
<organism evidence="14">
    <name type="scientific">Homo sapiens</name>
    <name type="common">Human</name>
    <dbReference type="NCBI Taxonomy" id="9606"/>
    <lineage>
        <taxon>Eukaryota</taxon>
        <taxon>Metazoa</taxon>
        <taxon>Chordata</taxon>
        <taxon>Craniata</taxon>
        <taxon>Vertebrata</taxon>
        <taxon>Euteleostomi</taxon>
        <taxon>Mammalia</taxon>
        <taxon>Eutheria</taxon>
        <taxon>Euarchontoglires</taxon>
        <taxon>Primates</taxon>
        <taxon>Haplorrhini</taxon>
        <taxon>Catarrhini</taxon>
        <taxon>Hominidae</taxon>
        <taxon>Homo</taxon>
    </lineage>
</organism>
<gene>
    <name type="primary">RPS6KA4</name>
    <name type="synonym">MSK2</name>
</gene>
<dbReference type="EC" id="2.7.11.1"/>
<dbReference type="EMBL" id="AJ010119">
    <property type="protein sequence ID" value="CAA09009.1"/>
    <property type="molecule type" value="mRNA"/>
</dbReference>
<dbReference type="EMBL" id="AK223561">
    <property type="protein sequence ID" value="BAD97281.1"/>
    <property type="molecule type" value="mRNA"/>
</dbReference>
<dbReference type="EMBL" id="AK292163">
    <property type="protein sequence ID" value="BAF84852.1"/>
    <property type="molecule type" value="mRNA"/>
</dbReference>
<dbReference type="EMBL" id="CH471076">
    <property type="protein sequence ID" value="EAW74260.1"/>
    <property type="molecule type" value="Genomic_DNA"/>
</dbReference>
<dbReference type="EMBL" id="AF074715">
    <property type="protein sequence ID" value="AAC67395.1"/>
    <property type="molecule type" value="mRNA"/>
</dbReference>
<dbReference type="CCDS" id="CCDS8073.1">
    <molecule id="O75676-1"/>
</dbReference>
<dbReference type="RefSeq" id="NP_001006945.1">
    <molecule id="O75676-2"/>
    <property type="nucleotide sequence ID" value="NM_001006944.2"/>
</dbReference>
<dbReference type="RefSeq" id="NP_001287731.1">
    <property type="nucleotide sequence ID" value="NM_001300802.1"/>
</dbReference>
<dbReference type="RefSeq" id="NP_001305290.1">
    <property type="nucleotide sequence ID" value="NM_001318361.1"/>
</dbReference>
<dbReference type="RefSeq" id="NP_003933.1">
    <molecule id="O75676-1"/>
    <property type="nucleotide sequence ID" value="NM_003942.3"/>
</dbReference>
<dbReference type="SMR" id="O75676"/>
<dbReference type="BioGRID" id="114468">
    <property type="interactions" value="132"/>
</dbReference>
<dbReference type="ELM" id="O75676"/>
<dbReference type="FunCoup" id="O75676">
    <property type="interactions" value="2352"/>
</dbReference>
<dbReference type="IntAct" id="O75676">
    <property type="interactions" value="66"/>
</dbReference>
<dbReference type="MINT" id="O75676"/>
<dbReference type="STRING" id="9606.ENSP00000333896"/>
<dbReference type="BindingDB" id="O75676"/>
<dbReference type="ChEMBL" id="CHEMBL3125"/>
<dbReference type="DrugBank" id="DB03247">
    <property type="generic name" value="Flavin mononucleotide"/>
</dbReference>
<dbReference type="DrugCentral" id="O75676"/>
<dbReference type="GuidetoPHARMACOLOGY" id="1524"/>
<dbReference type="GlyGen" id="O75676">
    <property type="glycosylation" value="1 site, 1 O-linked glycan (1 site)"/>
</dbReference>
<dbReference type="iPTMnet" id="O75676"/>
<dbReference type="PhosphoSitePlus" id="O75676"/>
<dbReference type="BioMuta" id="RPS6KA4"/>
<dbReference type="CPTAC" id="CPTAC-3104"/>
<dbReference type="jPOST" id="O75676"/>
<dbReference type="MassIVE" id="O75676"/>
<dbReference type="PaxDb" id="9606-ENSP00000333896"/>
<dbReference type="PeptideAtlas" id="O75676"/>
<dbReference type="ProteomicsDB" id="50149">
    <molecule id="O75676-1"/>
</dbReference>
<dbReference type="ProteomicsDB" id="50150">
    <molecule id="O75676-2"/>
</dbReference>
<dbReference type="Pumba" id="O75676"/>
<dbReference type="Antibodypedia" id="3272">
    <property type="antibodies" value="276 antibodies from 32 providers"/>
</dbReference>
<dbReference type="DNASU" id="8986"/>
<dbReference type="Ensembl" id="ENST00000334205.9">
    <molecule id="O75676-1"/>
    <property type="protein sequence ID" value="ENSP00000333896.4"/>
    <property type="gene ID" value="ENSG00000162302.13"/>
</dbReference>
<dbReference type="GeneID" id="8986"/>
<dbReference type="KEGG" id="hsa:8986"/>
<dbReference type="MANE-Select" id="ENST00000334205.9">
    <property type="protein sequence ID" value="ENSP00000333896.4"/>
    <property type="RefSeq nucleotide sequence ID" value="NM_003942.3"/>
    <property type="RefSeq protein sequence ID" value="NP_003933.1"/>
</dbReference>
<dbReference type="UCSC" id="uc001oae.4">
    <molecule id="O75676-1"/>
    <property type="organism name" value="human"/>
</dbReference>
<dbReference type="AGR" id="HGNC:10433"/>
<dbReference type="CTD" id="8986"/>
<dbReference type="DisGeNET" id="8986"/>
<dbReference type="GeneCards" id="RPS6KA4"/>
<dbReference type="HGNC" id="HGNC:10433">
    <property type="gene designation" value="RPS6KA4"/>
</dbReference>
<dbReference type="HPA" id="ENSG00000162302">
    <property type="expression patterns" value="Tissue enhanced (brain)"/>
</dbReference>
<dbReference type="MIM" id="603606">
    <property type="type" value="gene"/>
</dbReference>
<dbReference type="neXtProt" id="NX_O75676"/>
<dbReference type="OpenTargets" id="ENSG00000162302"/>
<dbReference type="PharmGKB" id="PA34848"/>
<dbReference type="VEuPathDB" id="HostDB:ENSG00000162302"/>
<dbReference type="eggNOG" id="KOG0603">
    <property type="taxonomic scope" value="Eukaryota"/>
</dbReference>
<dbReference type="GeneTree" id="ENSGT00940000161083"/>
<dbReference type="InParanoid" id="O75676"/>
<dbReference type="OMA" id="DVFTDQY"/>
<dbReference type="OrthoDB" id="6764942at2759"/>
<dbReference type="PAN-GO" id="O75676">
    <property type="GO annotations" value="6 GO annotations based on evolutionary models"/>
</dbReference>
<dbReference type="PhylomeDB" id="O75676"/>
<dbReference type="TreeFam" id="TF313438"/>
<dbReference type="PathwayCommons" id="O75676"/>
<dbReference type="Reactome" id="R-HSA-437239">
    <property type="pathway name" value="Recycling pathway of L1"/>
</dbReference>
<dbReference type="SignaLink" id="O75676"/>
<dbReference type="SIGNOR" id="O75676"/>
<dbReference type="BioGRID-ORCS" id="8986">
    <property type="hits" value="23 hits in 1197 CRISPR screens"/>
</dbReference>
<dbReference type="ChiTaRS" id="RPS6KA4">
    <property type="organism name" value="human"/>
</dbReference>
<dbReference type="GeneWiki" id="RPS6KA4"/>
<dbReference type="GenomeRNAi" id="8986"/>
<dbReference type="Pharos" id="O75676">
    <property type="development level" value="Tchem"/>
</dbReference>
<dbReference type="PRO" id="PR:O75676"/>
<dbReference type="Proteomes" id="UP000005640">
    <property type="component" value="Chromosome 11"/>
</dbReference>
<dbReference type="RNAct" id="O75676">
    <property type="molecule type" value="protein"/>
</dbReference>
<dbReference type="Bgee" id="ENSG00000162302">
    <property type="expression patterns" value="Expressed in right hemisphere of cerebellum and 144 other cell types or tissues"/>
</dbReference>
<dbReference type="ExpressionAtlas" id="O75676">
    <property type="expression patterns" value="baseline and differential"/>
</dbReference>
<dbReference type="GO" id="GO:0005737">
    <property type="term" value="C:cytoplasm"/>
    <property type="evidence" value="ECO:0000318"/>
    <property type="project" value="GO_Central"/>
</dbReference>
<dbReference type="GO" id="GO:0005829">
    <property type="term" value="C:cytosol"/>
    <property type="evidence" value="ECO:0000314"/>
    <property type="project" value="HPA"/>
</dbReference>
<dbReference type="GO" id="GO:0005654">
    <property type="term" value="C:nucleoplasm"/>
    <property type="evidence" value="ECO:0000314"/>
    <property type="project" value="HPA"/>
</dbReference>
<dbReference type="GO" id="GO:0005634">
    <property type="term" value="C:nucleus"/>
    <property type="evidence" value="ECO:0000314"/>
    <property type="project" value="UniProtKB"/>
</dbReference>
<dbReference type="GO" id="GO:0045202">
    <property type="term" value="C:synapse"/>
    <property type="evidence" value="ECO:0007669"/>
    <property type="project" value="Ensembl"/>
</dbReference>
<dbReference type="GO" id="GO:0005524">
    <property type="term" value="F:ATP binding"/>
    <property type="evidence" value="ECO:0000314"/>
    <property type="project" value="UniProtKB"/>
</dbReference>
<dbReference type="GO" id="GO:0035175">
    <property type="term" value="F:histone H3S10 kinase activity"/>
    <property type="evidence" value="ECO:0000315"/>
    <property type="project" value="UniProtKB"/>
</dbReference>
<dbReference type="GO" id="GO:0044022">
    <property type="term" value="F:histone H3S28 kinase activity"/>
    <property type="evidence" value="ECO:0000315"/>
    <property type="project" value="UniProtKB"/>
</dbReference>
<dbReference type="GO" id="GO:0000287">
    <property type="term" value="F:magnesium ion binding"/>
    <property type="evidence" value="ECO:0007669"/>
    <property type="project" value="InterPro"/>
</dbReference>
<dbReference type="GO" id="GO:0106310">
    <property type="term" value="F:protein serine kinase activity"/>
    <property type="evidence" value="ECO:0007669"/>
    <property type="project" value="RHEA"/>
</dbReference>
<dbReference type="GO" id="GO:0004674">
    <property type="term" value="F:protein serine/threonine kinase activity"/>
    <property type="evidence" value="ECO:0000314"/>
    <property type="project" value="UniProtKB"/>
</dbReference>
<dbReference type="GO" id="GO:0004711">
    <property type="term" value="F:ribosomal protein S6 kinase activity"/>
    <property type="evidence" value="ECO:0000303"/>
    <property type="project" value="UniProtKB"/>
</dbReference>
<dbReference type="GO" id="GO:0006954">
    <property type="term" value="P:inflammatory response"/>
    <property type="evidence" value="ECO:0007669"/>
    <property type="project" value="UniProtKB-KW"/>
</dbReference>
<dbReference type="GO" id="GO:0070498">
    <property type="term" value="P:interleukin-1-mediated signaling pathway"/>
    <property type="evidence" value="ECO:0000315"/>
    <property type="project" value="BHF-UCL"/>
</dbReference>
<dbReference type="GO" id="GO:0035556">
    <property type="term" value="P:intracellular signal transduction"/>
    <property type="evidence" value="ECO:0000314"/>
    <property type="project" value="UniProtKB"/>
</dbReference>
<dbReference type="GO" id="GO:0001818">
    <property type="term" value="P:negative regulation of cytokine production"/>
    <property type="evidence" value="ECO:0000304"/>
    <property type="project" value="UniProtKB"/>
</dbReference>
<dbReference type="GO" id="GO:0032793">
    <property type="term" value="P:positive regulation of CREB transcription factor activity"/>
    <property type="evidence" value="ECO:0000304"/>
    <property type="project" value="UniProtKB"/>
</dbReference>
<dbReference type="GO" id="GO:0051092">
    <property type="term" value="P:positive regulation of NF-kappaB transcription factor activity"/>
    <property type="evidence" value="ECO:0000304"/>
    <property type="project" value="UniProtKB"/>
</dbReference>
<dbReference type="GO" id="GO:0045944">
    <property type="term" value="P:positive regulation of transcription by RNA polymerase II"/>
    <property type="evidence" value="ECO:0000315"/>
    <property type="project" value="BHF-UCL"/>
</dbReference>
<dbReference type="GO" id="GO:0043687">
    <property type="term" value="P:post-translational protein modification"/>
    <property type="evidence" value="ECO:0000315"/>
    <property type="project" value="UniProtKB"/>
</dbReference>
<dbReference type="GO" id="GO:0006468">
    <property type="term" value="P:protein phosphorylation"/>
    <property type="evidence" value="ECO:0000314"/>
    <property type="project" value="UniProtKB"/>
</dbReference>
<dbReference type="GO" id="GO:0006355">
    <property type="term" value="P:regulation of DNA-templated transcription"/>
    <property type="evidence" value="ECO:0000314"/>
    <property type="project" value="UniProtKB"/>
</dbReference>
<dbReference type="GO" id="GO:0038202">
    <property type="term" value="P:TORC1 signaling"/>
    <property type="evidence" value="ECO:0000318"/>
    <property type="project" value="GO_Central"/>
</dbReference>
<dbReference type="CDD" id="cd05614">
    <property type="entry name" value="STKc_MSK2_N"/>
    <property type="match status" value="1"/>
</dbReference>
<dbReference type="FunFam" id="1.10.510.10:FF:000109">
    <property type="entry name" value="Ribosomal protein S6 kinase"/>
    <property type="match status" value="1"/>
</dbReference>
<dbReference type="FunFam" id="1.10.510.10:FF:000157">
    <property type="entry name" value="Ribosomal protein S6 kinase"/>
    <property type="match status" value="1"/>
</dbReference>
<dbReference type="FunFam" id="3.30.200.20:FF:000208">
    <property type="entry name" value="Ribosomal protein S6 kinase"/>
    <property type="match status" value="1"/>
</dbReference>
<dbReference type="FunFam" id="3.30.200.20:FF:000686">
    <property type="entry name" value="Ribosomal protein S6 kinase"/>
    <property type="match status" value="1"/>
</dbReference>
<dbReference type="Gene3D" id="3.30.200.20">
    <property type="entry name" value="Phosphorylase Kinase, domain 1"/>
    <property type="match status" value="2"/>
</dbReference>
<dbReference type="Gene3D" id="1.10.510.10">
    <property type="entry name" value="Transferase(Phosphotransferase) domain 1"/>
    <property type="match status" value="2"/>
</dbReference>
<dbReference type="InterPro" id="IPR000961">
    <property type="entry name" value="AGC-kinase_C"/>
</dbReference>
<dbReference type="InterPro" id="IPR011009">
    <property type="entry name" value="Kinase-like_dom_sf"/>
</dbReference>
<dbReference type="InterPro" id="IPR037714">
    <property type="entry name" value="MSK2_N_dom"/>
</dbReference>
<dbReference type="InterPro" id="IPR017892">
    <property type="entry name" value="Pkinase_C"/>
</dbReference>
<dbReference type="InterPro" id="IPR000719">
    <property type="entry name" value="Prot_kinase_dom"/>
</dbReference>
<dbReference type="InterPro" id="IPR017441">
    <property type="entry name" value="Protein_kinase_ATP_BS"/>
</dbReference>
<dbReference type="InterPro" id="IPR016239">
    <property type="entry name" value="Ribosomal_S6_kinase_II"/>
</dbReference>
<dbReference type="InterPro" id="IPR008271">
    <property type="entry name" value="Ser/Thr_kinase_AS"/>
</dbReference>
<dbReference type="PANTHER" id="PTHR24351">
    <property type="entry name" value="RIBOSOMAL PROTEIN S6 KINASE"/>
    <property type="match status" value="1"/>
</dbReference>
<dbReference type="Pfam" id="PF00069">
    <property type="entry name" value="Pkinase"/>
    <property type="match status" value="2"/>
</dbReference>
<dbReference type="Pfam" id="PF00433">
    <property type="entry name" value="Pkinase_C"/>
    <property type="match status" value="1"/>
</dbReference>
<dbReference type="PIRSF" id="PIRSF000606">
    <property type="entry name" value="Ribsml_S6_kin_2"/>
    <property type="match status" value="1"/>
</dbReference>
<dbReference type="SMART" id="SM00133">
    <property type="entry name" value="S_TK_X"/>
    <property type="match status" value="1"/>
</dbReference>
<dbReference type="SMART" id="SM00220">
    <property type="entry name" value="S_TKc"/>
    <property type="match status" value="2"/>
</dbReference>
<dbReference type="SUPFAM" id="SSF56112">
    <property type="entry name" value="Protein kinase-like (PK-like)"/>
    <property type="match status" value="2"/>
</dbReference>
<dbReference type="PROSITE" id="PS51285">
    <property type="entry name" value="AGC_KINASE_CTER"/>
    <property type="match status" value="1"/>
</dbReference>
<dbReference type="PROSITE" id="PS00107">
    <property type="entry name" value="PROTEIN_KINASE_ATP"/>
    <property type="match status" value="2"/>
</dbReference>
<dbReference type="PROSITE" id="PS50011">
    <property type="entry name" value="PROTEIN_KINASE_DOM"/>
    <property type="match status" value="2"/>
</dbReference>
<dbReference type="PROSITE" id="PS00108">
    <property type="entry name" value="PROTEIN_KINASE_ST"/>
    <property type="match status" value="2"/>
</dbReference>